<name>CRR54_ARATH</name>
<organism>
    <name type="scientific">Arabidopsis thaliana</name>
    <name type="common">Mouse-ear cress</name>
    <dbReference type="NCBI Taxonomy" id="3702"/>
    <lineage>
        <taxon>Eukaryota</taxon>
        <taxon>Viridiplantae</taxon>
        <taxon>Streptophyta</taxon>
        <taxon>Embryophyta</taxon>
        <taxon>Tracheophyta</taxon>
        <taxon>Spermatophyta</taxon>
        <taxon>Magnoliopsida</taxon>
        <taxon>eudicotyledons</taxon>
        <taxon>Gunneridae</taxon>
        <taxon>Pentapetalae</taxon>
        <taxon>rosids</taxon>
        <taxon>malvids</taxon>
        <taxon>Brassicales</taxon>
        <taxon>Brassicaceae</taxon>
        <taxon>Camelineae</taxon>
        <taxon>Arabidopsis</taxon>
    </lineage>
</organism>
<accession>P0CJ61</accession>
<accession>F4JVK7</accession>
<accession>Q680R8</accession>
<accession>Q9S7J6</accession>
<accession>Q9SUM6</accession>
<protein>
    <recommendedName>
        <fullName>Cysteine-rich repeat secretory protein 54</fullName>
    </recommendedName>
</protein>
<reference key="1">
    <citation type="journal article" date="1999" name="Nature">
        <title>Sequence and analysis of chromosome 4 of the plant Arabidopsis thaliana.</title>
        <authorList>
            <person name="Mayer K.F.X."/>
            <person name="Schueller C."/>
            <person name="Wambutt R."/>
            <person name="Murphy G."/>
            <person name="Volckaert G."/>
            <person name="Pohl T."/>
            <person name="Duesterhoeft A."/>
            <person name="Stiekema W."/>
            <person name="Entian K.-D."/>
            <person name="Terryn N."/>
            <person name="Harris B."/>
            <person name="Ansorge W."/>
            <person name="Brandt P."/>
            <person name="Grivell L.A."/>
            <person name="Rieger M."/>
            <person name="Weichselgartner M."/>
            <person name="de Simone V."/>
            <person name="Obermaier B."/>
            <person name="Mache R."/>
            <person name="Mueller M."/>
            <person name="Kreis M."/>
            <person name="Delseny M."/>
            <person name="Puigdomenech P."/>
            <person name="Watson M."/>
            <person name="Schmidtheini T."/>
            <person name="Reichert B."/>
            <person name="Portetelle D."/>
            <person name="Perez-Alonso M."/>
            <person name="Boutry M."/>
            <person name="Bancroft I."/>
            <person name="Vos P."/>
            <person name="Hoheisel J."/>
            <person name="Zimmermann W."/>
            <person name="Wedler H."/>
            <person name="Ridley P."/>
            <person name="Langham S.-A."/>
            <person name="McCullagh B."/>
            <person name="Bilham L."/>
            <person name="Robben J."/>
            <person name="van der Schueren J."/>
            <person name="Grymonprez B."/>
            <person name="Chuang Y.-J."/>
            <person name="Vandenbussche F."/>
            <person name="Braeken M."/>
            <person name="Weltjens I."/>
            <person name="Voet M."/>
            <person name="Bastiaens I."/>
            <person name="Aert R."/>
            <person name="Defoor E."/>
            <person name="Weitzenegger T."/>
            <person name="Bothe G."/>
            <person name="Ramsperger U."/>
            <person name="Hilbert H."/>
            <person name="Braun M."/>
            <person name="Holzer E."/>
            <person name="Brandt A."/>
            <person name="Peters S."/>
            <person name="van Staveren M."/>
            <person name="Dirkse W."/>
            <person name="Mooijman P."/>
            <person name="Klein Lankhorst R."/>
            <person name="Rose M."/>
            <person name="Hauf J."/>
            <person name="Koetter P."/>
            <person name="Berneiser S."/>
            <person name="Hempel S."/>
            <person name="Feldpausch M."/>
            <person name="Lamberth S."/>
            <person name="Van den Daele H."/>
            <person name="De Keyser A."/>
            <person name="Buysshaert C."/>
            <person name="Gielen J."/>
            <person name="Villarroel R."/>
            <person name="De Clercq R."/>
            <person name="van Montagu M."/>
            <person name="Rogers J."/>
            <person name="Cronin A."/>
            <person name="Quail M.A."/>
            <person name="Bray-Allen S."/>
            <person name="Clark L."/>
            <person name="Doggett J."/>
            <person name="Hall S."/>
            <person name="Kay M."/>
            <person name="Lennard N."/>
            <person name="McLay K."/>
            <person name="Mayes R."/>
            <person name="Pettett A."/>
            <person name="Rajandream M.A."/>
            <person name="Lyne M."/>
            <person name="Benes V."/>
            <person name="Rechmann S."/>
            <person name="Borkova D."/>
            <person name="Bloecker H."/>
            <person name="Scharfe M."/>
            <person name="Grimm M."/>
            <person name="Loehnert T.-H."/>
            <person name="Dose S."/>
            <person name="de Haan M."/>
            <person name="Maarse A.C."/>
            <person name="Schaefer M."/>
            <person name="Mueller-Auer S."/>
            <person name="Gabel C."/>
            <person name="Fuchs M."/>
            <person name="Fartmann B."/>
            <person name="Granderath K."/>
            <person name="Dauner D."/>
            <person name="Herzl A."/>
            <person name="Neumann S."/>
            <person name="Argiriou A."/>
            <person name="Vitale D."/>
            <person name="Liguori R."/>
            <person name="Piravandi E."/>
            <person name="Massenet O."/>
            <person name="Quigley F."/>
            <person name="Clabauld G."/>
            <person name="Muendlein A."/>
            <person name="Felber R."/>
            <person name="Schnabl S."/>
            <person name="Hiller R."/>
            <person name="Schmidt W."/>
            <person name="Lecharny A."/>
            <person name="Aubourg S."/>
            <person name="Chefdor F."/>
            <person name="Cooke R."/>
            <person name="Berger C."/>
            <person name="Monfort A."/>
            <person name="Casacuberta E."/>
            <person name="Gibbons T."/>
            <person name="Weber N."/>
            <person name="Vandenbol M."/>
            <person name="Bargues M."/>
            <person name="Terol J."/>
            <person name="Torres A."/>
            <person name="Perez-Perez A."/>
            <person name="Purnelle B."/>
            <person name="Bent E."/>
            <person name="Johnson S."/>
            <person name="Tacon D."/>
            <person name="Jesse T."/>
            <person name="Heijnen L."/>
            <person name="Schwarz S."/>
            <person name="Scholler P."/>
            <person name="Heber S."/>
            <person name="Francs P."/>
            <person name="Bielke C."/>
            <person name="Frishman D."/>
            <person name="Haase D."/>
            <person name="Lemcke K."/>
            <person name="Mewes H.-W."/>
            <person name="Stocker S."/>
            <person name="Zaccaria P."/>
            <person name="Bevan M."/>
            <person name="Wilson R.K."/>
            <person name="de la Bastide M."/>
            <person name="Habermann K."/>
            <person name="Parnell L."/>
            <person name="Dedhia N."/>
            <person name="Gnoj L."/>
            <person name="Schutz K."/>
            <person name="Huang E."/>
            <person name="Spiegel L."/>
            <person name="Sekhon M."/>
            <person name="Murray J."/>
            <person name="Sheet P."/>
            <person name="Cordes M."/>
            <person name="Abu-Threideh J."/>
            <person name="Stoneking T."/>
            <person name="Kalicki J."/>
            <person name="Graves T."/>
            <person name="Harmon G."/>
            <person name="Edwards J."/>
            <person name="Latreille P."/>
            <person name="Courtney L."/>
            <person name="Cloud J."/>
            <person name="Abbott A."/>
            <person name="Scott K."/>
            <person name="Johnson D."/>
            <person name="Minx P."/>
            <person name="Bentley D."/>
            <person name="Fulton B."/>
            <person name="Miller N."/>
            <person name="Greco T."/>
            <person name="Kemp K."/>
            <person name="Kramer J."/>
            <person name="Fulton L."/>
            <person name="Mardis E."/>
            <person name="Dante M."/>
            <person name="Pepin K."/>
            <person name="Hillier L.W."/>
            <person name="Nelson J."/>
            <person name="Spieth J."/>
            <person name="Ryan E."/>
            <person name="Andrews S."/>
            <person name="Geisel C."/>
            <person name="Layman D."/>
            <person name="Du H."/>
            <person name="Ali J."/>
            <person name="Berghoff A."/>
            <person name="Jones K."/>
            <person name="Drone K."/>
            <person name="Cotton M."/>
            <person name="Joshu C."/>
            <person name="Antonoiu B."/>
            <person name="Zidanic M."/>
            <person name="Strong C."/>
            <person name="Sun H."/>
            <person name="Lamar B."/>
            <person name="Yordan C."/>
            <person name="Ma P."/>
            <person name="Zhong J."/>
            <person name="Preston R."/>
            <person name="Vil D."/>
            <person name="Shekher M."/>
            <person name="Matero A."/>
            <person name="Shah R."/>
            <person name="Swaby I.K."/>
            <person name="O'Shaughnessy A."/>
            <person name="Rodriguez M."/>
            <person name="Hoffman J."/>
            <person name="Till S."/>
            <person name="Granat S."/>
            <person name="Shohdy N."/>
            <person name="Hasegawa A."/>
            <person name="Hameed A."/>
            <person name="Lodhi M."/>
            <person name="Johnson A."/>
            <person name="Chen E."/>
            <person name="Marra M.A."/>
            <person name="Martienssen R."/>
            <person name="McCombie W.R."/>
        </authorList>
    </citation>
    <scope>NUCLEOTIDE SEQUENCE [LARGE SCALE GENOMIC DNA]</scope>
    <source>
        <strain>cv. Columbia</strain>
    </source>
</reference>
<reference key="2">
    <citation type="journal article" date="2017" name="Plant J.">
        <title>Araport11: a complete reannotation of the Arabidopsis thaliana reference genome.</title>
        <authorList>
            <person name="Cheng C.Y."/>
            <person name="Krishnakumar V."/>
            <person name="Chan A.P."/>
            <person name="Thibaud-Nissen F."/>
            <person name="Schobel S."/>
            <person name="Town C.D."/>
        </authorList>
    </citation>
    <scope>GENOME REANNOTATION</scope>
    <source>
        <strain>cv. Columbia</strain>
    </source>
</reference>
<reference key="3">
    <citation type="journal article" date="2001" name="Plant Physiol.">
        <title>A superfamily of proteins with novel cysteine-rich repeats.</title>
        <authorList>
            <person name="Chen Z."/>
        </authorList>
    </citation>
    <scope>GENE FAMILY ORGANIZATION</scope>
    <scope>NOMENCLATURE</scope>
</reference>
<proteinExistence type="inferred from homology"/>
<dbReference type="EMBL" id="AL080253">
    <property type="protein sequence ID" value="CAB45819.1"/>
    <property type="status" value="ALT_SEQ"/>
    <property type="molecule type" value="Genomic_DNA"/>
</dbReference>
<dbReference type="EMBL" id="AL161553">
    <property type="protein sequence ID" value="CAB79053.1"/>
    <property type="status" value="ALT_SEQ"/>
    <property type="molecule type" value="Genomic_DNA"/>
</dbReference>
<dbReference type="EMBL" id="CP002687">
    <property type="status" value="NOT_ANNOTATED_CDS"/>
    <property type="molecule type" value="Genomic_DNA"/>
</dbReference>
<dbReference type="PIR" id="T10595">
    <property type="entry name" value="T10595"/>
</dbReference>
<dbReference type="RefSeq" id="NP_001320013.1">
    <property type="nucleotide sequence ID" value="NM_001341449.1"/>
</dbReference>
<dbReference type="RefSeq" id="NP_567608.3">
    <property type="nucleotide sequence ID" value="NM_118177.3"/>
</dbReference>
<dbReference type="RefSeq" id="NP_567609.3">
    <property type="nucleotide sequence ID" value="NM_118178.3"/>
</dbReference>
<dbReference type="RefSeq" id="NP_567610.3">
    <property type="nucleotide sequence ID" value="NM_118179.3"/>
</dbReference>
<dbReference type="RefSeq" id="NP_567611.3">
    <property type="nucleotide sequence ID" value="NM_118180.3"/>
</dbReference>
<dbReference type="RefSeq" id="NP_567612.3">
    <property type="nucleotide sequence ID" value="NM_118181.3"/>
</dbReference>
<dbReference type="RefSeq" id="NP_567614.3">
    <property type="nucleotide sequence ID" value="NM_118183.3"/>
</dbReference>
<dbReference type="SMR" id="P0CJ61"/>
<dbReference type="STRING" id="3702.P0CJ61"/>
<dbReference type="EnsemblPlants" id="AT4G20580.1">
    <property type="protein sequence ID" value="AT4G20580.1"/>
    <property type="gene ID" value="AT4G20580"/>
</dbReference>
<dbReference type="EnsemblPlants" id="AT4G20590.1">
    <property type="protein sequence ID" value="AT4G20590.1"/>
    <property type="gene ID" value="AT4G20590"/>
</dbReference>
<dbReference type="EnsemblPlants" id="AT4G20600.1">
    <property type="protein sequence ID" value="AT4G20600.1"/>
    <property type="gene ID" value="AT4G20600"/>
</dbReference>
<dbReference type="EnsemblPlants" id="AT4G20610.1">
    <property type="protein sequence ID" value="AT4G20610.1"/>
    <property type="gene ID" value="AT4G20610"/>
</dbReference>
<dbReference type="EnsemblPlants" id="AT4G20620.1">
    <property type="protein sequence ID" value="AT4G20620.1"/>
    <property type="gene ID" value="AT4G20620"/>
</dbReference>
<dbReference type="EnsemblPlants" id="AT4G20630.1">
    <property type="protein sequence ID" value="AT4G20630.1"/>
    <property type="gene ID" value="AT4G20630"/>
</dbReference>
<dbReference type="EnsemblPlants" id="AT4G20640.1">
    <property type="protein sequence ID" value="AT4G20640.1"/>
    <property type="gene ID" value="AT4G20640"/>
</dbReference>
<dbReference type="Gramene" id="AT4G20580.1">
    <property type="protein sequence ID" value="AT4G20580.1"/>
    <property type="gene ID" value="AT4G20580"/>
</dbReference>
<dbReference type="Gramene" id="AT4G20590.1">
    <property type="protein sequence ID" value="AT4G20590.1"/>
    <property type="gene ID" value="AT4G20590"/>
</dbReference>
<dbReference type="Gramene" id="AT4G20600.1">
    <property type="protein sequence ID" value="AT4G20600.1"/>
    <property type="gene ID" value="AT4G20600"/>
</dbReference>
<dbReference type="Gramene" id="AT4G20610.1">
    <property type="protein sequence ID" value="AT4G20610.1"/>
    <property type="gene ID" value="AT4G20610"/>
</dbReference>
<dbReference type="Gramene" id="AT4G20620.1">
    <property type="protein sequence ID" value="AT4G20620.1"/>
    <property type="gene ID" value="AT4G20620"/>
</dbReference>
<dbReference type="Gramene" id="AT4G20630.1">
    <property type="protein sequence ID" value="AT4G20630.1"/>
    <property type="gene ID" value="AT4G20630"/>
</dbReference>
<dbReference type="Gramene" id="AT4G20640.1">
    <property type="protein sequence ID" value="AT4G20640.1"/>
    <property type="gene ID" value="AT4G20640"/>
</dbReference>
<dbReference type="KEGG" id="ath:AT4G20580"/>
<dbReference type="KEGG" id="ath:AT4G20590"/>
<dbReference type="KEGG" id="ath:AT4G20600"/>
<dbReference type="KEGG" id="ath:AT4G20610"/>
<dbReference type="KEGG" id="ath:AT4G20620"/>
<dbReference type="KEGG" id="ath:AT4G20630"/>
<dbReference type="KEGG" id="ath:AT4G20640"/>
<dbReference type="Araport" id="AT4G20530"/>
<dbReference type="TAIR" id="AT4G20530"/>
<dbReference type="HOGENOM" id="CLU_000288_35_0_1"/>
<dbReference type="InParanoid" id="P0CJ61"/>
<dbReference type="OMA" id="FIQVWNI"/>
<dbReference type="PRO" id="PR:P0CJ61"/>
<dbReference type="Proteomes" id="UP000006548">
    <property type="component" value="Chromosome 4"/>
</dbReference>
<dbReference type="ExpressionAtlas" id="P0CJ61">
    <property type="expression patterns" value="baseline"/>
</dbReference>
<dbReference type="GO" id="GO:0005576">
    <property type="term" value="C:extracellular region"/>
    <property type="evidence" value="ECO:0007669"/>
    <property type="project" value="UniProtKB-SubCell"/>
</dbReference>
<dbReference type="CDD" id="cd23509">
    <property type="entry name" value="Gnk2-like"/>
    <property type="match status" value="2"/>
</dbReference>
<dbReference type="FunFam" id="3.30.430.20:FF:000002">
    <property type="entry name" value="Cysteine-rich receptor-like protein kinase 10"/>
    <property type="match status" value="1"/>
</dbReference>
<dbReference type="Gene3D" id="3.30.430.20">
    <property type="entry name" value="Gnk2 domain, C-X8-C-X2-C motif"/>
    <property type="match status" value="2"/>
</dbReference>
<dbReference type="InterPro" id="IPR050581">
    <property type="entry name" value="CRR_secretory_protein"/>
</dbReference>
<dbReference type="InterPro" id="IPR002902">
    <property type="entry name" value="GNK2"/>
</dbReference>
<dbReference type="InterPro" id="IPR038408">
    <property type="entry name" value="GNK2_sf"/>
</dbReference>
<dbReference type="PANTHER" id="PTHR32411:SF54">
    <property type="entry name" value="CYSTEINE-RICH REPEAT SECRETORY PROTEIN 29-RELATED"/>
    <property type="match status" value="1"/>
</dbReference>
<dbReference type="PANTHER" id="PTHR32411">
    <property type="entry name" value="CYSTEINE-RICH REPEAT SECRETORY PROTEIN 38-RELATED"/>
    <property type="match status" value="1"/>
</dbReference>
<dbReference type="Pfam" id="PF01657">
    <property type="entry name" value="Stress-antifung"/>
    <property type="match status" value="2"/>
</dbReference>
<dbReference type="PROSITE" id="PS51473">
    <property type="entry name" value="GNK2"/>
    <property type="match status" value="2"/>
</dbReference>
<feature type="signal peptide" evidence="1">
    <location>
        <begin position="1"/>
        <end position="26"/>
    </location>
</feature>
<feature type="chain" id="PRO_0000403950" description="Cysteine-rich repeat secretory protein 54">
    <location>
        <begin position="27"/>
        <end position="256"/>
    </location>
</feature>
<feature type="domain" description="Gnk2-homologous 1" evidence="2">
    <location>
        <begin position="33"/>
        <end position="136"/>
    </location>
</feature>
<feature type="domain" description="Gnk2-homologous 2" evidence="2">
    <location>
        <begin position="142"/>
        <end position="253"/>
    </location>
</feature>
<comment type="subcellular location">
    <subcellularLocation>
        <location evidence="3">Secreted</location>
    </subcellularLocation>
</comment>
<comment type="similarity">
    <text evidence="3">Belongs to the cysteine-rich repeat secretory protein family.</text>
</comment>
<comment type="sequence caution" evidence="3">
    <conflict type="erroneous gene model prediction">
        <sequence resource="EMBL-CDS" id="CAB45819"/>
    </conflict>
</comment>
<comment type="sequence caution" evidence="3">
    <conflict type="erroneous gene model prediction">
        <sequence resource="EMBL-CDS" id="CAB79053"/>
    </conflict>
</comment>
<gene>
    <name type="primary">CRRSP54</name>
    <name type="ordered locus">At4g20530</name>
    <name type="ORF">F9F13.180</name>
</gene>
<sequence length="256" mass="29018">MSSVFGSVHILAMIAIQLLLTHSVSSLNLTNAYLHHKCSNTQGKYKQGSAFEKNLNLVLSTITSIGNFRDGFRYTEEGEDPNNVFVMFQCRGDSYWSKCPPCISTAVSGLRRRCPRNKGAIIWYDQCLLKISSVASFNKIDYENDFYLSNPNNMSDRGLFNKETSALLEKLAYKASDRNNLDGKQLVLYAAGEKRIGTKKVYAMVQCTKDLIFTKCFECLEGILRKFPQCCDGKRGGRVFGTSCNFRYELYPFLRN</sequence>
<evidence type="ECO:0000255" key="1"/>
<evidence type="ECO:0000255" key="2">
    <source>
        <dbReference type="PROSITE-ProRule" id="PRU00806"/>
    </source>
</evidence>
<evidence type="ECO:0000305" key="3"/>
<keyword id="KW-1185">Reference proteome</keyword>
<keyword id="KW-0677">Repeat</keyword>
<keyword id="KW-0964">Secreted</keyword>
<keyword id="KW-0732">Signal</keyword>